<protein>
    <recommendedName>
        <fullName evidence="1">Elongation factor G 2</fullName>
        <shortName evidence="1">EF-G 2</shortName>
    </recommendedName>
</protein>
<reference key="1">
    <citation type="submission" date="2005-10" db="EMBL/GenBank/DDBJ databases">
        <title>Complete sequence of Pelobacter carbinolicus DSM 2380.</title>
        <authorList>
            <person name="Copeland A."/>
            <person name="Lucas S."/>
            <person name="Lapidus A."/>
            <person name="Barry K."/>
            <person name="Detter J.C."/>
            <person name="Glavina T."/>
            <person name="Hammon N."/>
            <person name="Israni S."/>
            <person name="Pitluck S."/>
            <person name="Chertkov O."/>
            <person name="Schmutz J."/>
            <person name="Larimer F."/>
            <person name="Land M."/>
            <person name="Kyrpides N."/>
            <person name="Ivanova N."/>
            <person name="Richardson P."/>
        </authorList>
    </citation>
    <scope>NUCLEOTIDE SEQUENCE [LARGE SCALE GENOMIC DNA]</scope>
    <source>
        <strain>DSM 2380 / NBRC 103641 / GraBd1</strain>
    </source>
</reference>
<comment type="function">
    <text evidence="1">Catalyzes the GTP-dependent ribosomal translocation step during translation elongation. During this step, the ribosome changes from the pre-translocational (PRE) to the post-translocational (POST) state as the newly formed A-site-bound peptidyl-tRNA and P-site-bound deacylated tRNA move to the P and E sites, respectively. Catalyzes the coordinated movement of the two tRNA molecules, the mRNA and conformational changes in the ribosome.</text>
</comment>
<comment type="subcellular location">
    <subcellularLocation>
        <location evidence="1">Cytoplasm</location>
    </subcellularLocation>
</comment>
<comment type="similarity">
    <text evidence="1">Belongs to the TRAFAC class translation factor GTPase superfamily. Classic translation factor GTPase family. EF-G/EF-2 subfamily.</text>
</comment>
<keyword id="KW-0963">Cytoplasm</keyword>
<keyword id="KW-0251">Elongation factor</keyword>
<keyword id="KW-0342">GTP-binding</keyword>
<keyword id="KW-0547">Nucleotide-binding</keyword>
<keyword id="KW-0648">Protein biosynthesis</keyword>
<keyword id="KW-1185">Reference proteome</keyword>
<gene>
    <name evidence="1" type="primary">fusA2</name>
    <name type="ordered locus">Pcar_0698</name>
</gene>
<dbReference type="EMBL" id="CP000142">
    <property type="protein sequence ID" value="ABA87957.1"/>
    <property type="molecule type" value="Genomic_DNA"/>
</dbReference>
<dbReference type="RefSeq" id="WP_011340400.1">
    <property type="nucleotide sequence ID" value="NC_007498.2"/>
</dbReference>
<dbReference type="SMR" id="Q3A6Q0"/>
<dbReference type="STRING" id="338963.Pcar_0698"/>
<dbReference type="KEGG" id="pca:Pcar_0698"/>
<dbReference type="eggNOG" id="COG0480">
    <property type="taxonomic scope" value="Bacteria"/>
</dbReference>
<dbReference type="HOGENOM" id="CLU_002794_4_1_7"/>
<dbReference type="OrthoDB" id="9801591at2"/>
<dbReference type="Proteomes" id="UP000002534">
    <property type="component" value="Chromosome"/>
</dbReference>
<dbReference type="GO" id="GO:0005737">
    <property type="term" value="C:cytoplasm"/>
    <property type="evidence" value="ECO:0007669"/>
    <property type="project" value="UniProtKB-SubCell"/>
</dbReference>
<dbReference type="GO" id="GO:0005525">
    <property type="term" value="F:GTP binding"/>
    <property type="evidence" value="ECO:0007669"/>
    <property type="project" value="UniProtKB-UniRule"/>
</dbReference>
<dbReference type="GO" id="GO:0003924">
    <property type="term" value="F:GTPase activity"/>
    <property type="evidence" value="ECO:0007669"/>
    <property type="project" value="InterPro"/>
</dbReference>
<dbReference type="GO" id="GO:0003746">
    <property type="term" value="F:translation elongation factor activity"/>
    <property type="evidence" value="ECO:0007669"/>
    <property type="project" value="UniProtKB-UniRule"/>
</dbReference>
<dbReference type="GO" id="GO:0032790">
    <property type="term" value="P:ribosome disassembly"/>
    <property type="evidence" value="ECO:0007669"/>
    <property type="project" value="TreeGrafter"/>
</dbReference>
<dbReference type="CDD" id="cd01886">
    <property type="entry name" value="EF-G"/>
    <property type="match status" value="1"/>
</dbReference>
<dbReference type="CDD" id="cd16262">
    <property type="entry name" value="EFG_III"/>
    <property type="match status" value="1"/>
</dbReference>
<dbReference type="CDD" id="cd01434">
    <property type="entry name" value="EFG_mtEFG1_IV"/>
    <property type="match status" value="1"/>
</dbReference>
<dbReference type="CDD" id="cd03713">
    <property type="entry name" value="EFG_mtEFG_C"/>
    <property type="match status" value="1"/>
</dbReference>
<dbReference type="CDD" id="cd04088">
    <property type="entry name" value="EFG_mtEFG_II"/>
    <property type="match status" value="1"/>
</dbReference>
<dbReference type="FunFam" id="2.40.30.10:FF:000006">
    <property type="entry name" value="Elongation factor G"/>
    <property type="match status" value="1"/>
</dbReference>
<dbReference type="FunFam" id="3.30.230.10:FF:000003">
    <property type="entry name" value="Elongation factor G"/>
    <property type="match status" value="1"/>
</dbReference>
<dbReference type="FunFam" id="3.30.70.240:FF:000001">
    <property type="entry name" value="Elongation factor G"/>
    <property type="match status" value="1"/>
</dbReference>
<dbReference type="FunFam" id="3.30.70.870:FF:000001">
    <property type="entry name" value="Elongation factor G"/>
    <property type="match status" value="1"/>
</dbReference>
<dbReference type="FunFam" id="3.40.50.300:FF:000029">
    <property type="entry name" value="Elongation factor G"/>
    <property type="match status" value="1"/>
</dbReference>
<dbReference type="Gene3D" id="3.30.230.10">
    <property type="match status" value="1"/>
</dbReference>
<dbReference type="Gene3D" id="3.30.70.240">
    <property type="match status" value="1"/>
</dbReference>
<dbReference type="Gene3D" id="3.30.70.870">
    <property type="entry name" value="Elongation Factor G (Translational Gtpase), domain 3"/>
    <property type="match status" value="1"/>
</dbReference>
<dbReference type="Gene3D" id="3.40.50.300">
    <property type="entry name" value="P-loop containing nucleotide triphosphate hydrolases"/>
    <property type="match status" value="1"/>
</dbReference>
<dbReference type="Gene3D" id="2.40.30.10">
    <property type="entry name" value="Translation factors"/>
    <property type="match status" value="1"/>
</dbReference>
<dbReference type="HAMAP" id="MF_00054_B">
    <property type="entry name" value="EF_G_EF_2_B"/>
    <property type="match status" value="1"/>
</dbReference>
<dbReference type="InterPro" id="IPR053905">
    <property type="entry name" value="EF-G-like_DII"/>
</dbReference>
<dbReference type="InterPro" id="IPR041095">
    <property type="entry name" value="EFG_II"/>
</dbReference>
<dbReference type="InterPro" id="IPR009022">
    <property type="entry name" value="EFG_III"/>
</dbReference>
<dbReference type="InterPro" id="IPR035647">
    <property type="entry name" value="EFG_III/V"/>
</dbReference>
<dbReference type="InterPro" id="IPR047872">
    <property type="entry name" value="EFG_IV"/>
</dbReference>
<dbReference type="InterPro" id="IPR035649">
    <property type="entry name" value="EFG_V"/>
</dbReference>
<dbReference type="InterPro" id="IPR000640">
    <property type="entry name" value="EFG_V-like"/>
</dbReference>
<dbReference type="InterPro" id="IPR031157">
    <property type="entry name" value="G_TR_CS"/>
</dbReference>
<dbReference type="InterPro" id="IPR027417">
    <property type="entry name" value="P-loop_NTPase"/>
</dbReference>
<dbReference type="InterPro" id="IPR020568">
    <property type="entry name" value="Ribosomal_Su5_D2-typ_SF"/>
</dbReference>
<dbReference type="InterPro" id="IPR014721">
    <property type="entry name" value="Ribsml_uS5_D2-typ_fold_subgr"/>
</dbReference>
<dbReference type="InterPro" id="IPR005225">
    <property type="entry name" value="Small_GTP-bd"/>
</dbReference>
<dbReference type="InterPro" id="IPR000795">
    <property type="entry name" value="T_Tr_GTP-bd_dom"/>
</dbReference>
<dbReference type="InterPro" id="IPR009000">
    <property type="entry name" value="Transl_B-barrel_sf"/>
</dbReference>
<dbReference type="InterPro" id="IPR004540">
    <property type="entry name" value="Transl_elong_EFG/EF2"/>
</dbReference>
<dbReference type="InterPro" id="IPR005517">
    <property type="entry name" value="Transl_elong_EFG/EF2_IV"/>
</dbReference>
<dbReference type="NCBIfam" id="TIGR00484">
    <property type="entry name" value="EF-G"/>
    <property type="match status" value="1"/>
</dbReference>
<dbReference type="NCBIfam" id="NF009379">
    <property type="entry name" value="PRK12740.1-3"/>
    <property type="match status" value="1"/>
</dbReference>
<dbReference type="NCBIfam" id="NF009381">
    <property type="entry name" value="PRK12740.1-5"/>
    <property type="match status" value="1"/>
</dbReference>
<dbReference type="NCBIfam" id="TIGR00231">
    <property type="entry name" value="small_GTP"/>
    <property type="match status" value="1"/>
</dbReference>
<dbReference type="PANTHER" id="PTHR43261:SF1">
    <property type="entry name" value="RIBOSOME-RELEASING FACTOR 2, MITOCHONDRIAL"/>
    <property type="match status" value="1"/>
</dbReference>
<dbReference type="PANTHER" id="PTHR43261">
    <property type="entry name" value="TRANSLATION ELONGATION FACTOR G-RELATED"/>
    <property type="match status" value="1"/>
</dbReference>
<dbReference type="Pfam" id="PF22042">
    <property type="entry name" value="EF-G_D2"/>
    <property type="match status" value="1"/>
</dbReference>
<dbReference type="Pfam" id="PF00679">
    <property type="entry name" value="EFG_C"/>
    <property type="match status" value="1"/>
</dbReference>
<dbReference type="Pfam" id="PF14492">
    <property type="entry name" value="EFG_III"/>
    <property type="match status" value="1"/>
</dbReference>
<dbReference type="Pfam" id="PF03764">
    <property type="entry name" value="EFG_IV"/>
    <property type="match status" value="1"/>
</dbReference>
<dbReference type="Pfam" id="PF00009">
    <property type="entry name" value="GTP_EFTU"/>
    <property type="match status" value="1"/>
</dbReference>
<dbReference type="PRINTS" id="PR00315">
    <property type="entry name" value="ELONGATNFCT"/>
</dbReference>
<dbReference type="SMART" id="SM00838">
    <property type="entry name" value="EFG_C"/>
    <property type="match status" value="1"/>
</dbReference>
<dbReference type="SMART" id="SM00889">
    <property type="entry name" value="EFG_IV"/>
    <property type="match status" value="1"/>
</dbReference>
<dbReference type="SUPFAM" id="SSF54980">
    <property type="entry name" value="EF-G C-terminal domain-like"/>
    <property type="match status" value="2"/>
</dbReference>
<dbReference type="SUPFAM" id="SSF52540">
    <property type="entry name" value="P-loop containing nucleoside triphosphate hydrolases"/>
    <property type="match status" value="1"/>
</dbReference>
<dbReference type="SUPFAM" id="SSF54211">
    <property type="entry name" value="Ribosomal protein S5 domain 2-like"/>
    <property type="match status" value="1"/>
</dbReference>
<dbReference type="SUPFAM" id="SSF50447">
    <property type="entry name" value="Translation proteins"/>
    <property type="match status" value="1"/>
</dbReference>
<dbReference type="PROSITE" id="PS00301">
    <property type="entry name" value="G_TR_1"/>
    <property type="match status" value="1"/>
</dbReference>
<dbReference type="PROSITE" id="PS51722">
    <property type="entry name" value="G_TR_2"/>
    <property type="match status" value="1"/>
</dbReference>
<name>EFG2_SYNC1</name>
<organism>
    <name type="scientific">Syntrophotalea carbinolica (strain DSM 2380 / NBRC 103641 / GraBd1)</name>
    <name type="common">Pelobacter carbinolicus</name>
    <dbReference type="NCBI Taxonomy" id="338963"/>
    <lineage>
        <taxon>Bacteria</taxon>
        <taxon>Pseudomonadati</taxon>
        <taxon>Thermodesulfobacteriota</taxon>
        <taxon>Desulfuromonadia</taxon>
        <taxon>Desulfuromonadales</taxon>
        <taxon>Syntrophotaleaceae</taxon>
        <taxon>Syntrophotalea</taxon>
    </lineage>
</organism>
<evidence type="ECO:0000255" key="1">
    <source>
        <dbReference type="HAMAP-Rule" id="MF_00054"/>
    </source>
</evidence>
<proteinExistence type="inferred from homology"/>
<feature type="chain" id="PRO_0000225225" description="Elongation factor G 2">
    <location>
        <begin position="1"/>
        <end position="692"/>
    </location>
</feature>
<feature type="domain" description="tr-type G">
    <location>
        <begin position="8"/>
        <end position="283"/>
    </location>
</feature>
<feature type="binding site" evidence="1">
    <location>
        <begin position="17"/>
        <end position="24"/>
    </location>
    <ligand>
        <name>GTP</name>
        <dbReference type="ChEBI" id="CHEBI:37565"/>
    </ligand>
</feature>
<feature type="binding site" evidence="1">
    <location>
        <begin position="81"/>
        <end position="85"/>
    </location>
    <ligand>
        <name>GTP</name>
        <dbReference type="ChEBI" id="CHEBI:37565"/>
    </ligand>
</feature>
<feature type="binding site" evidence="1">
    <location>
        <begin position="135"/>
        <end position="138"/>
    </location>
    <ligand>
        <name>GTP</name>
        <dbReference type="ChEBI" id="CHEBI:37565"/>
    </ligand>
</feature>
<accession>Q3A6Q0</accession>
<sequence>MARQVSLEKTRNIGIMAHIDAGKTTTTERVLYYTGVSHKIGEVHDGAATMDWMEQEQERGITITSAATTCFWRDHRVNIIDTPGHVDFTVEVERSLRVLDGSVAVFCSVGGVEPQSETVWRQADKYRVPRIAFINKMDRIGADFDRGVNMIRERLGANAIPLQLPIGKEDNFSGVVDLVEMKAIVWDDESLGARFEVVDIPADLQERVDSGRELLVEEVCTHDEALMDKYLGGEEITLEELKNGIRKACIDIKIIPVLCGSAFKNKGVQNLLDAVIDYMPSPVDVPAITGVVPDTEEEITRPAGDDGPFAALAFKVMTDPFVGQLTFFRVYSGVAESGATVLNATRDKKERFGRLLKMHANKREEIKQVYSGDIAAAVGLKLTTTGDTLCDPANPCLLESMEFPEPVIHIAIEPKTKGDMDKMGQALGKLVQEDPTLRVRTDEETGQTILSGMGELHLEIIIDRLQREFKVDANVGAPQVAYRETITKAVEVQGKFVRQSGGRGQYGDCWLKLEPQEPGAGYEFVDAIKGGVIPREYIPAVGKGAEEAAENGVVAGFPIVDVKVTCYDGSYHDVDSSEMAFKIAGSMGFKAGAAKASPVLLEPVMAVEVVVPEEYMGDVMGDLSSRRGRVLGMDARGGAQVINSNVPLASMFGYATELRSMTQGRATYTMVFDHYEQVPKAISEEIVARVKG</sequence>